<gene>
    <name type="primary">CCA1</name>
    <name type="synonym">TNT1</name>
    <name type="ordered locus">YER168C</name>
</gene>
<dbReference type="EC" id="2.7.7.72" evidence="4"/>
<dbReference type="EMBL" id="M59870">
    <property type="protein sequence ID" value="AAA35160.1"/>
    <property type="molecule type" value="Genomic_DNA"/>
</dbReference>
<dbReference type="EMBL" id="U18922">
    <property type="protein sequence ID" value="AAB64695.1"/>
    <property type="molecule type" value="Genomic_DNA"/>
</dbReference>
<dbReference type="EMBL" id="BK006939">
    <property type="protein sequence ID" value="DAA07830.1"/>
    <property type="molecule type" value="Genomic_DNA"/>
</dbReference>
<dbReference type="PIR" id="S11180">
    <property type="entry name" value="S11180"/>
</dbReference>
<dbReference type="RefSeq" id="NP_011095.1">
    <molecule id="P21269-1"/>
    <property type="nucleotide sequence ID" value="NM_001179058.1"/>
</dbReference>
<dbReference type="SMR" id="P21269"/>
<dbReference type="BioGRID" id="36921">
    <property type="interactions" value="271"/>
</dbReference>
<dbReference type="DIP" id="DIP-2841N"/>
<dbReference type="FunCoup" id="P21269">
    <property type="interactions" value="175"/>
</dbReference>
<dbReference type="IntAct" id="P21269">
    <property type="interactions" value="13"/>
</dbReference>
<dbReference type="MINT" id="P21269"/>
<dbReference type="STRING" id="4932.YER168C"/>
<dbReference type="GlyGen" id="P21269">
    <property type="glycosylation" value="1 site"/>
</dbReference>
<dbReference type="iPTMnet" id="P21269"/>
<dbReference type="PaxDb" id="4932-YER168C"/>
<dbReference type="PeptideAtlas" id="P21269"/>
<dbReference type="EnsemblFungi" id="YER168C_mRNA">
    <molecule id="P21269-1"/>
    <property type="protein sequence ID" value="YER168C"/>
    <property type="gene ID" value="YER168C"/>
</dbReference>
<dbReference type="GeneID" id="856915"/>
<dbReference type="KEGG" id="sce:YER168C"/>
<dbReference type="AGR" id="SGD:S000000970"/>
<dbReference type="SGD" id="S000000970">
    <property type="gene designation" value="CCA1"/>
</dbReference>
<dbReference type="VEuPathDB" id="FungiDB:YER168C"/>
<dbReference type="eggNOG" id="KOG2159">
    <property type="taxonomic scope" value="Eukaryota"/>
</dbReference>
<dbReference type="GeneTree" id="ENSGT00390000009678"/>
<dbReference type="HOGENOM" id="CLU_019592_2_1_1"/>
<dbReference type="InParanoid" id="P21269"/>
<dbReference type="OMA" id="WQKFLDH"/>
<dbReference type="OrthoDB" id="445712at2759"/>
<dbReference type="BioCyc" id="YEAST:G3O-30329-MONOMER"/>
<dbReference type="BRENDA" id="2.7.7.72">
    <property type="organism ID" value="984"/>
</dbReference>
<dbReference type="BioGRID-ORCS" id="856915">
    <property type="hits" value="8 hits in 10 CRISPR screens"/>
</dbReference>
<dbReference type="PRO" id="PR:P21269"/>
<dbReference type="Proteomes" id="UP000002311">
    <property type="component" value="Chromosome V"/>
</dbReference>
<dbReference type="RNAct" id="P21269">
    <property type="molecule type" value="protein"/>
</dbReference>
<dbReference type="GO" id="GO:0005759">
    <property type="term" value="C:mitochondrial matrix"/>
    <property type="evidence" value="ECO:0000314"/>
    <property type="project" value="SGD"/>
</dbReference>
<dbReference type="GO" id="GO:0005739">
    <property type="term" value="C:mitochondrion"/>
    <property type="evidence" value="ECO:0007005"/>
    <property type="project" value="SGD"/>
</dbReference>
<dbReference type="GO" id="GO:0005634">
    <property type="term" value="C:nucleus"/>
    <property type="evidence" value="ECO:0007669"/>
    <property type="project" value="UniProtKB-SubCell"/>
</dbReference>
<dbReference type="GO" id="GO:0005524">
    <property type="term" value="F:ATP binding"/>
    <property type="evidence" value="ECO:0007669"/>
    <property type="project" value="UniProtKB-KW"/>
</dbReference>
<dbReference type="GO" id="GO:0052929">
    <property type="term" value="F:ATP:3'-cytidine-cytidine-tRNA adenylyltransferase activity"/>
    <property type="evidence" value="ECO:0000314"/>
    <property type="project" value="SGD"/>
</dbReference>
<dbReference type="GO" id="GO:0052927">
    <property type="term" value="F:CC tRNA cytidylyltransferase activity"/>
    <property type="evidence" value="ECO:0000314"/>
    <property type="project" value="SGD"/>
</dbReference>
<dbReference type="GO" id="GO:0004810">
    <property type="term" value="F:CCA tRNA nucleotidyltransferase activity"/>
    <property type="evidence" value="ECO:0000314"/>
    <property type="project" value="SGD"/>
</dbReference>
<dbReference type="GO" id="GO:0003723">
    <property type="term" value="F:RNA binding"/>
    <property type="evidence" value="ECO:0007669"/>
    <property type="project" value="UniProtKB-KW"/>
</dbReference>
<dbReference type="GO" id="GO:0001680">
    <property type="term" value="P:tRNA 3'-terminal CCA addition"/>
    <property type="evidence" value="ECO:0000314"/>
    <property type="project" value="SGD"/>
</dbReference>
<dbReference type="CDD" id="cd05398">
    <property type="entry name" value="NT_ClassII-CCAase"/>
    <property type="match status" value="1"/>
</dbReference>
<dbReference type="FunFam" id="3.30.460.10:FF:000019">
    <property type="entry name" value="tRNA nucleotidyltransferase cca2"/>
    <property type="match status" value="1"/>
</dbReference>
<dbReference type="Gene3D" id="3.30.460.10">
    <property type="entry name" value="Beta Polymerase, domain 2"/>
    <property type="match status" value="1"/>
</dbReference>
<dbReference type="Gene3D" id="1.10.3090.10">
    <property type="entry name" value="cca-adding enzyme, domain 2"/>
    <property type="match status" value="1"/>
</dbReference>
<dbReference type="InterPro" id="IPR043519">
    <property type="entry name" value="NT_sf"/>
</dbReference>
<dbReference type="InterPro" id="IPR002646">
    <property type="entry name" value="PolA_pol_head_dom"/>
</dbReference>
<dbReference type="InterPro" id="IPR032828">
    <property type="entry name" value="PolyA_RNA-bd"/>
</dbReference>
<dbReference type="PANTHER" id="PTHR13734:SF5">
    <property type="entry name" value="CCA TRNA NUCLEOTIDYLTRANSFERASE, MITOCHONDRIAL"/>
    <property type="match status" value="1"/>
</dbReference>
<dbReference type="PANTHER" id="PTHR13734">
    <property type="entry name" value="TRNA-NUCLEOTIDYLTRANSFERASE"/>
    <property type="match status" value="1"/>
</dbReference>
<dbReference type="Pfam" id="PF01743">
    <property type="entry name" value="PolyA_pol"/>
    <property type="match status" value="1"/>
</dbReference>
<dbReference type="Pfam" id="PF12627">
    <property type="entry name" value="PolyA_pol_RNAbd"/>
    <property type="match status" value="1"/>
</dbReference>
<dbReference type="SUPFAM" id="SSF81301">
    <property type="entry name" value="Nucleotidyltransferase"/>
    <property type="match status" value="1"/>
</dbReference>
<dbReference type="SUPFAM" id="SSF81891">
    <property type="entry name" value="Poly A polymerase C-terminal region-like"/>
    <property type="match status" value="1"/>
</dbReference>
<organism>
    <name type="scientific">Saccharomyces cerevisiae (strain ATCC 204508 / S288c)</name>
    <name type="common">Baker's yeast</name>
    <dbReference type="NCBI Taxonomy" id="559292"/>
    <lineage>
        <taxon>Eukaryota</taxon>
        <taxon>Fungi</taxon>
        <taxon>Dikarya</taxon>
        <taxon>Ascomycota</taxon>
        <taxon>Saccharomycotina</taxon>
        <taxon>Saccharomycetes</taxon>
        <taxon>Saccharomycetales</taxon>
        <taxon>Saccharomycetaceae</taxon>
        <taxon>Saccharomyces</taxon>
    </lineage>
</organism>
<reference key="1">
    <citation type="journal article" date="1990" name="J. Biol. Chem.">
        <title>Isolation of a temperature-sensitive mutant with an altered tRNA nucleotidyltransferase and cloning of the gene encoding tRNA nucleotidyltransferase in the yeast Saccharomyces cerevisiae.</title>
        <authorList>
            <person name="Aebi M."/>
            <person name="Kirchner G."/>
            <person name="Chen J.Y."/>
            <person name="Vijayraghavan U."/>
            <person name="Jacobson A."/>
            <person name="Martin N.C."/>
            <person name="Abelson J."/>
        </authorList>
    </citation>
    <scope>NUCLEOTIDE SEQUENCE [GENOMIC DNA]</scope>
</reference>
<reference key="2">
    <citation type="journal article" date="1997" name="Nature">
        <title>The nucleotide sequence of Saccharomyces cerevisiae chromosome V.</title>
        <authorList>
            <person name="Dietrich F.S."/>
            <person name="Mulligan J.T."/>
            <person name="Hennessy K.M."/>
            <person name="Yelton M.A."/>
            <person name="Allen E."/>
            <person name="Araujo R."/>
            <person name="Aviles E."/>
            <person name="Berno A."/>
            <person name="Brennan T."/>
            <person name="Carpenter J."/>
            <person name="Chen E."/>
            <person name="Cherry J.M."/>
            <person name="Chung E."/>
            <person name="Duncan M."/>
            <person name="Guzman E."/>
            <person name="Hartzell G."/>
            <person name="Hunicke-Smith S."/>
            <person name="Hyman R.W."/>
            <person name="Kayser A."/>
            <person name="Komp C."/>
            <person name="Lashkari D."/>
            <person name="Lew H."/>
            <person name="Lin D."/>
            <person name="Mosedale D."/>
            <person name="Nakahara K."/>
            <person name="Namath A."/>
            <person name="Norgren R."/>
            <person name="Oefner P."/>
            <person name="Oh C."/>
            <person name="Petel F.X."/>
            <person name="Roberts D."/>
            <person name="Sehl P."/>
            <person name="Schramm S."/>
            <person name="Shogren T."/>
            <person name="Smith V."/>
            <person name="Taylor P."/>
            <person name="Wei Y."/>
            <person name="Botstein D."/>
            <person name="Davis R.W."/>
        </authorList>
    </citation>
    <scope>NUCLEOTIDE SEQUENCE [LARGE SCALE GENOMIC DNA]</scope>
    <source>
        <strain>ATCC 204508 / S288c</strain>
    </source>
</reference>
<reference key="3">
    <citation type="journal article" date="2014" name="G3 (Bethesda)">
        <title>The reference genome sequence of Saccharomyces cerevisiae: Then and now.</title>
        <authorList>
            <person name="Engel S.R."/>
            <person name="Dietrich F.S."/>
            <person name="Fisk D.G."/>
            <person name="Binkley G."/>
            <person name="Balakrishnan R."/>
            <person name="Costanzo M.C."/>
            <person name="Dwight S.S."/>
            <person name="Hitz B.C."/>
            <person name="Karra K."/>
            <person name="Nash R.S."/>
            <person name="Weng S."/>
            <person name="Wong E.D."/>
            <person name="Lloyd P."/>
            <person name="Skrzypek M.S."/>
            <person name="Miyasato S.R."/>
            <person name="Simison M."/>
            <person name="Cherry J.M."/>
        </authorList>
    </citation>
    <scope>GENOME REANNOTATION</scope>
    <source>
        <strain>ATCC 204508 / S288c</strain>
    </source>
</reference>
<reference key="4">
    <citation type="journal article" date="1994" name="J. Biol. Chem.">
        <title>Interplay of heterogeneous transcriptional start sites and translational selection of AUGs dictate the production of mitochondrial and cytosolic/nuclear tRNA nucleotidyltransferase from the same gene in yeast.</title>
        <authorList>
            <person name="Wolfe C.L."/>
            <person name="Lou Y.-C."/>
            <person name="Hopper A.K."/>
            <person name="Martin N.C."/>
        </authorList>
    </citation>
    <scope>ALTERNATIVE INITIATION</scope>
    <scope>PROTEIN SEQUENCE OF 19-26</scope>
    <scope>SUBCELLULAR LOCATION</scope>
</reference>
<reference key="5">
    <citation type="journal article" date="1992" name="J. Biol. Chem.">
        <title>Cytoplasmic and mitochondrial tRNA nucleotidyltransferase activities are derived from the same gene in the yeast Saccharomyces cerevisiae.</title>
        <authorList>
            <person name="Chen J.Y."/>
            <person name="Joyce P.B."/>
            <person name="Wolfe C.L."/>
            <person name="Steffen M.C."/>
            <person name="Martin N.C."/>
        </authorList>
    </citation>
    <scope>FUNCTION</scope>
    <scope>CATALYTIC ACTIVITY</scope>
    <scope>SUBCELLULAR LOCATION</scope>
</reference>
<reference key="6">
    <citation type="journal article" date="2003" name="Nature">
        <title>Global analysis of protein expression in yeast.</title>
        <authorList>
            <person name="Ghaemmaghami S."/>
            <person name="Huh W.-K."/>
            <person name="Bower K."/>
            <person name="Howson R.W."/>
            <person name="Belle A."/>
            <person name="Dephoure N."/>
            <person name="O'Shea E.K."/>
            <person name="Weissman J.S."/>
        </authorList>
    </citation>
    <scope>LEVEL OF PROTEIN EXPRESSION [LARGE SCALE ANALYSIS]</scope>
</reference>
<reference key="7">
    <citation type="journal article" date="2013" name="Biochim. Biophys. Acta">
        <title>The ability of an arginine to tryptophan substitution in Saccharomyces cerevisiae tRNA nucleotidyltransferase to alleviate a temperature-sensitive phenotype suggests a role for motif C in active site organization.</title>
        <authorList>
            <person name="Goring M.E."/>
            <person name="Leibovitch M."/>
            <person name="Gea-Mallorqui E."/>
            <person name="Karls S."/>
            <person name="Richard F."/>
            <person name="Hanic-Joyce P.J."/>
            <person name="Joyce P.B."/>
        </authorList>
    </citation>
    <scope>FUNCTION</scope>
    <scope>MUTAGENESIS OF ARG-64 AND GLU-189</scope>
</reference>
<protein>
    <recommendedName>
        <fullName>CCA tRNA nucleotidyltransferase, mitochondrial</fullName>
        <ecNumber evidence="4">2.7.7.72</ecNumber>
    </recommendedName>
    <alternativeName>
        <fullName>CCA-adding enzyme</fullName>
    </alternativeName>
    <alternativeName>
        <fullName>tRNA CCA-pyrophosphorylase</fullName>
    </alternativeName>
    <alternativeName>
        <fullName>tRNA adenylyltransferase</fullName>
    </alternativeName>
    <alternativeName>
        <fullName>tRNA nucleotidyltransferase</fullName>
    </alternativeName>
</protein>
<feature type="transit peptide" description="Mitochondrion" evidence="2">
    <location>
        <begin position="1"/>
        <end status="unknown"/>
    </location>
</feature>
<feature type="chain" id="PRO_0000004779" description="CCA tRNA nucleotidyltransferase, mitochondrial">
    <location>
        <begin status="unknown"/>
        <end position="546"/>
    </location>
</feature>
<feature type="splice variant" id="VSP_018699" description="In isoform Cytoplasmic+nuclear 2." evidence="7">
    <location>
        <begin position="1"/>
        <end position="17"/>
    </location>
</feature>
<feature type="splice variant" id="VSP_018698" description="In isoform Cytoplasmic+nuclear 1." evidence="7">
    <location>
        <begin position="1"/>
        <end position="9"/>
    </location>
</feature>
<feature type="mutagenesis site" description="No effect. Compensates K-189 mutant; when associated with K-189." evidence="5">
    <original>R</original>
    <variation>N</variation>
    <location>
        <position position="64"/>
    </location>
</feature>
<feature type="mutagenesis site" description="Temperature-sensitive mutation; reduced ability to incorporate AMP and CMP at 37 degrees Celsius. Defects are compensated by mutant N-64; when associated with N-64." evidence="5">
    <original>E</original>
    <variation>K</variation>
    <location>
        <position position="189"/>
    </location>
</feature>
<keyword id="KW-0024">Alternative initiation</keyword>
<keyword id="KW-0067">ATP-binding</keyword>
<keyword id="KW-0963">Cytoplasm</keyword>
<keyword id="KW-0903">Direct protein sequencing</keyword>
<keyword id="KW-0496">Mitochondrion</keyword>
<keyword id="KW-0547">Nucleotide-binding</keyword>
<keyword id="KW-0548">Nucleotidyltransferase</keyword>
<keyword id="KW-0539">Nucleus</keyword>
<keyword id="KW-1185">Reference proteome</keyword>
<keyword id="KW-0694">RNA-binding</keyword>
<keyword id="KW-0808">Transferase</keyword>
<keyword id="KW-0809">Transit peptide</keyword>
<sequence>MLRSTISLLMNSAAQKTMTNSNFVLNAPKITLTKVEQNICNLLNDYTDLYNQKYHNKPEPLTLRITGGWVRDKLLGQGSHDLDIAINVMSGEQFATGLNEYLQQHYAKYGAKPHNIHKIDKNPEKSKHLETATTKLFGVEVDFVNLRSEKYTELSRIPKVCFGTPEEDALRRDATLNALFYNIHKGEVEDFTKRGLQDLKDGVLRTPLPAKQTFLDDPLRVLRLIRFASRFNFTIDPEVMAEMGDPQINVAFNSKISRERVGVEMEKILVGPTPLLALQLIQRAHLENVIFFWHNDSSVVKFNEENCQDMDKINHVYNDNILNSHLKSFIELYPMFLEKLPILREKIGRSPGFQQNFILSAILSPMANLQIIGNPKKKINNLVSVTESIVKEGLKLSKNDAAVIAKTVDSICSYEEILAKFADRSQLKKSEIGIFLRNFNGEWETAHFASLSDAFLKIPKLETKKIELLFQNYNEFYSYIFDNNLNNCHELKPIVDGKQMAKLLQMKPGPWLGKINNEAIRWQFDNPTGTDQELITHLKAILPKYL</sequence>
<comment type="function">
    <text evidence="1 4 5">Nucleotidyltransferase that catalyzes the addition and repair of the essential 3'-terminal CCA sequence in tRNAs, which is necessary for the attachment of amino acids to the 3' terminus of tRNA molecules, using CTP and ATP as substrates (PubMed:1634528, PubMed:23872483). tRNA 3'-terminal CCA addition is required both for tRNA processing and repair (By similarity). Also involved in tRNA surveillance by mediating tandem CCA addition to generate a CCACCA at the 3' terminus of unstable tRNAs (By similarity). While stable tRNAs receive only 3'-terminal CCA, unstable tRNAs are marked with CCACCA and rapidly degraded (By similarity). The structural flexibility of RNA controls the choice between CCA versus CCACCA addition: following the first CCA addition cycle, nucleotide-binding to the active site triggers a clockwise screw motion, producing torque on the RNA (By similarity). This ejects stable RNAs, whereas unstable RNAs are refolded while bound to the enzyme and subjected to a second CCA catalytic cycle (By similarity).</text>
</comment>
<comment type="catalytic activity">
    <reaction evidence="4">
        <text>a tRNA precursor + 2 CTP + ATP = a tRNA with a 3' CCA end + 3 diphosphate</text>
        <dbReference type="Rhea" id="RHEA:14433"/>
        <dbReference type="Rhea" id="RHEA-COMP:10465"/>
        <dbReference type="Rhea" id="RHEA-COMP:10468"/>
        <dbReference type="ChEBI" id="CHEBI:30616"/>
        <dbReference type="ChEBI" id="CHEBI:33019"/>
        <dbReference type="ChEBI" id="CHEBI:37563"/>
        <dbReference type="ChEBI" id="CHEBI:74896"/>
        <dbReference type="ChEBI" id="CHEBI:83071"/>
        <dbReference type="EC" id="2.7.7.72"/>
    </reaction>
</comment>
<comment type="interaction">
    <interactant intactId="EBI-4347">
        <id>P21269</id>
    </interactant>
    <interactant intactId="EBI-6475">
        <id>P00925</id>
        <label>ENO2</label>
    </interactant>
    <organismsDiffer>false</organismsDiffer>
    <experiments>2</experiments>
</comment>
<comment type="subcellular location">
    <molecule>Isoform Mitochondrial</molecule>
    <subcellularLocation>
        <location evidence="4 6">Mitochondrion</location>
    </subcellularLocation>
</comment>
<comment type="subcellular location">
    <molecule>Isoform Cytoplasmic+nuclear 1</molecule>
    <subcellularLocation>
        <location evidence="4 6">Cytoplasm</location>
    </subcellularLocation>
    <subcellularLocation>
        <location evidence="6">Nucleus</location>
    </subcellularLocation>
</comment>
<comment type="subcellular location">
    <molecule>Isoform Cytoplasmic+nuclear 2</molecule>
    <subcellularLocation>
        <location evidence="4 6">Cytoplasm</location>
    </subcellularLocation>
    <subcellularLocation>
        <location evidence="6">Nucleus</location>
    </subcellularLocation>
</comment>
<comment type="alternative products">
    <event type="alternative initiation"/>
    <isoform>
        <id>P21269-1</id>
        <name>Mitochondrial</name>
        <sequence type="displayed"/>
    </isoform>
    <isoform>
        <id>P21269-2</id>
        <name>Cytoplasmic+nuclear 1</name>
        <sequence type="described" ref="VSP_018698"/>
    </isoform>
    <isoform>
        <id>P21269-3</id>
        <name>Cytoplasmic+nuclear 2</name>
        <sequence type="described" ref="VSP_018699"/>
    </isoform>
</comment>
<comment type="miscellaneous">
    <text evidence="3">Present with 13500 molecules/cell in log phase SD medium.</text>
</comment>
<comment type="miscellaneous">
    <molecule>Isoform Cytoplasmic+nuclear 1</molecule>
    <text evidence="7">Produced by alternative initiation at Met-10 of isoform Mitochondrial.</text>
</comment>
<comment type="miscellaneous">
    <molecule>Isoform Cytoplasmic+nuclear 2</molecule>
    <text evidence="7">Produced by alternative initiation at Met-18 of isoform Mitochondrial.</text>
</comment>
<comment type="similarity">
    <text evidence="7">Belongs to the tRNA nucleotidyltransferase/poly(A) polymerase family.</text>
</comment>
<name>CCA1_YEAST</name>
<accession>P21269</accession>
<accession>D3DM76</accession>
<proteinExistence type="evidence at protein level"/>
<evidence type="ECO:0000250" key="1">
    <source>
        <dbReference type="UniProtKB" id="Q96Q11"/>
    </source>
</evidence>
<evidence type="ECO:0000255" key="2"/>
<evidence type="ECO:0000269" key="3">
    <source>
    </source>
</evidence>
<evidence type="ECO:0000269" key="4">
    <source>
    </source>
</evidence>
<evidence type="ECO:0000269" key="5">
    <source>
    </source>
</evidence>
<evidence type="ECO:0000269" key="6">
    <source>
    </source>
</evidence>
<evidence type="ECO:0000305" key="7"/>